<feature type="chain" id="PRO_0000214395" description="FAD assembly factor SdhE">
    <location>
        <begin position="1"/>
        <end position="88"/>
    </location>
</feature>
<protein>
    <recommendedName>
        <fullName>FAD assembly factor SdhE</fullName>
    </recommendedName>
</protein>
<gene>
    <name type="primary">sdhE</name>
    <name type="synonym">ygfY</name>
    <name type="ordered locus">Z4235</name>
    <name type="ordered locus">ECs3769</name>
</gene>
<keyword id="KW-0143">Chaperone</keyword>
<keyword id="KW-0963">Cytoplasm</keyword>
<keyword id="KW-1185">Reference proteome</keyword>
<proteinExistence type="inferred from homology"/>
<dbReference type="EMBL" id="AE005174">
    <property type="protein sequence ID" value="AAG58025.1"/>
    <property type="molecule type" value="Genomic_DNA"/>
</dbReference>
<dbReference type="EMBL" id="BA000007">
    <property type="protein sequence ID" value="BAB37192.1"/>
    <property type="molecule type" value="Genomic_DNA"/>
</dbReference>
<dbReference type="PIR" id="A98100">
    <property type="entry name" value="A98100"/>
</dbReference>
<dbReference type="PIR" id="E85945">
    <property type="entry name" value="E85945"/>
</dbReference>
<dbReference type="RefSeq" id="NP_311796.1">
    <property type="nucleotide sequence ID" value="NC_002695.1"/>
</dbReference>
<dbReference type="RefSeq" id="WP_000354046.1">
    <property type="nucleotide sequence ID" value="NZ_VOAI01000003.1"/>
</dbReference>
<dbReference type="SMR" id="P64561"/>
<dbReference type="STRING" id="155864.Z4235"/>
<dbReference type="GeneID" id="916353"/>
<dbReference type="GeneID" id="93779105"/>
<dbReference type="KEGG" id="ece:Z4235"/>
<dbReference type="KEGG" id="ecs:ECs_3769"/>
<dbReference type="PATRIC" id="fig|386585.9.peg.3933"/>
<dbReference type="eggNOG" id="COG2938">
    <property type="taxonomic scope" value="Bacteria"/>
</dbReference>
<dbReference type="HOGENOM" id="CLU_103054_2_2_6"/>
<dbReference type="OMA" id="FEHEYDT"/>
<dbReference type="Proteomes" id="UP000000558">
    <property type="component" value="Chromosome"/>
</dbReference>
<dbReference type="Proteomes" id="UP000002519">
    <property type="component" value="Chromosome"/>
</dbReference>
<dbReference type="GO" id="GO:0005737">
    <property type="term" value="C:cytoplasm"/>
    <property type="evidence" value="ECO:0007669"/>
    <property type="project" value="UniProtKB-SubCell"/>
</dbReference>
<dbReference type="GO" id="GO:0006105">
    <property type="term" value="P:succinate metabolic process"/>
    <property type="evidence" value="ECO:0007669"/>
    <property type="project" value="TreeGrafter"/>
</dbReference>
<dbReference type="FunFam" id="1.10.150.250:FF:000001">
    <property type="entry name" value="FAD assembly factor SdhE"/>
    <property type="match status" value="1"/>
</dbReference>
<dbReference type="Gene3D" id="1.10.150.250">
    <property type="entry name" value="Flavinator of succinate dehydrogenase"/>
    <property type="match status" value="1"/>
</dbReference>
<dbReference type="InterPro" id="IPR005631">
    <property type="entry name" value="SDH"/>
</dbReference>
<dbReference type="InterPro" id="IPR036714">
    <property type="entry name" value="SDH_sf"/>
</dbReference>
<dbReference type="InterPro" id="IPR050531">
    <property type="entry name" value="SdhE_FAD_assembly_factor"/>
</dbReference>
<dbReference type="NCBIfam" id="NF008130">
    <property type="entry name" value="PRK10878.1"/>
    <property type="match status" value="1"/>
</dbReference>
<dbReference type="PANTHER" id="PTHR39585">
    <property type="entry name" value="FAD ASSEMBLY FACTOR SDHE"/>
    <property type="match status" value="1"/>
</dbReference>
<dbReference type="PANTHER" id="PTHR39585:SF1">
    <property type="entry name" value="FAD ASSEMBLY FACTOR SDHE"/>
    <property type="match status" value="1"/>
</dbReference>
<dbReference type="Pfam" id="PF03937">
    <property type="entry name" value="Sdh5"/>
    <property type="match status" value="1"/>
</dbReference>
<dbReference type="SUPFAM" id="SSF109910">
    <property type="entry name" value="YgfY-like"/>
    <property type="match status" value="1"/>
</dbReference>
<sequence length="88" mass="10547">MDINNKARIHWACRRGMRELDISIMPFFEHEYDSLSDDEKRIFIRLLECDDPDLFNWLMNHGKPADAELEMMVRLIQTRNRERGPVAI</sequence>
<comment type="function">
    <text evidence="1">An FAD assembly protein, which accelerates covalent attachment of the cofactor into other proteins. Plays an essential role in the assembly of succinate dehydrogenase (SDH, respiratory complex II), an enzyme complex that is a component of both the tricarboxylic acid cycle and the electron transport chain, and which couples the oxidation of succinate to fumarate with the reduction of ubiquinone (coenzyme Q) to ubiquinol. Required for flavinylation (covalent attachment of FAD) of the flavoprotein subunit SdhA of SDH and other flavinylated proteins as well.</text>
</comment>
<comment type="subunit">
    <text evidence="2">Monomer.</text>
</comment>
<comment type="subcellular location">
    <subcellularLocation>
        <location evidence="1">Cytoplasm</location>
    </subcellularLocation>
</comment>
<comment type="similarity">
    <text evidence="3">Belongs to the SdhE FAD assembly factor family.</text>
</comment>
<organism>
    <name type="scientific">Escherichia coli O157:H7</name>
    <dbReference type="NCBI Taxonomy" id="83334"/>
    <lineage>
        <taxon>Bacteria</taxon>
        <taxon>Pseudomonadati</taxon>
        <taxon>Pseudomonadota</taxon>
        <taxon>Gammaproteobacteria</taxon>
        <taxon>Enterobacterales</taxon>
        <taxon>Enterobacteriaceae</taxon>
        <taxon>Escherichia</taxon>
    </lineage>
</organism>
<reference key="1">
    <citation type="journal article" date="2001" name="Nature">
        <title>Genome sequence of enterohaemorrhagic Escherichia coli O157:H7.</title>
        <authorList>
            <person name="Perna N.T."/>
            <person name="Plunkett G. III"/>
            <person name="Burland V."/>
            <person name="Mau B."/>
            <person name="Glasner J.D."/>
            <person name="Rose D.J."/>
            <person name="Mayhew G.F."/>
            <person name="Evans P.S."/>
            <person name="Gregor J."/>
            <person name="Kirkpatrick H.A."/>
            <person name="Posfai G."/>
            <person name="Hackett J."/>
            <person name="Klink S."/>
            <person name="Boutin A."/>
            <person name="Shao Y."/>
            <person name="Miller L."/>
            <person name="Grotbeck E.J."/>
            <person name="Davis N.W."/>
            <person name="Lim A."/>
            <person name="Dimalanta E.T."/>
            <person name="Potamousis K."/>
            <person name="Apodaca J."/>
            <person name="Anantharaman T.S."/>
            <person name="Lin J."/>
            <person name="Yen G."/>
            <person name="Schwartz D.C."/>
            <person name="Welch R.A."/>
            <person name="Blattner F.R."/>
        </authorList>
    </citation>
    <scope>NUCLEOTIDE SEQUENCE [LARGE SCALE GENOMIC DNA]</scope>
    <source>
        <strain>O157:H7 / EDL933 / ATCC 700927 / EHEC</strain>
    </source>
</reference>
<reference key="2">
    <citation type="journal article" date="2001" name="DNA Res.">
        <title>Complete genome sequence of enterohemorrhagic Escherichia coli O157:H7 and genomic comparison with a laboratory strain K-12.</title>
        <authorList>
            <person name="Hayashi T."/>
            <person name="Makino K."/>
            <person name="Ohnishi M."/>
            <person name="Kurokawa K."/>
            <person name="Ishii K."/>
            <person name="Yokoyama K."/>
            <person name="Han C.-G."/>
            <person name="Ohtsubo E."/>
            <person name="Nakayama K."/>
            <person name="Murata T."/>
            <person name="Tanaka M."/>
            <person name="Tobe T."/>
            <person name="Iida T."/>
            <person name="Takami H."/>
            <person name="Honda T."/>
            <person name="Sasakawa C."/>
            <person name="Ogasawara N."/>
            <person name="Yasunaga T."/>
            <person name="Kuhara S."/>
            <person name="Shiba T."/>
            <person name="Hattori M."/>
            <person name="Shinagawa H."/>
        </authorList>
    </citation>
    <scope>NUCLEOTIDE SEQUENCE [LARGE SCALE GENOMIC DNA]</scope>
    <source>
        <strain>O157:H7 / Sakai / RIMD 0509952 / EHEC</strain>
    </source>
</reference>
<evidence type="ECO:0000250" key="1">
    <source>
        <dbReference type="UniProtKB" id="G4V4G2"/>
    </source>
</evidence>
<evidence type="ECO:0000250" key="2">
    <source>
        <dbReference type="UniProtKB" id="P64559"/>
    </source>
</evidence>
<evidence type="ECO:0000305" key="3"/>
<name>SDHE_ECO57</name>
<accession>P64561</accession>
<accession>Q46825</accession>